<gene>
    <name type="primary">actg1</name>
</gene>
<feature type="chain" id="PRO_0000367106" description="Actin, cytoplasmic 2">
    <location>
        <begin position="1"/>
        <end position="375"/>
    </location>
</feature>
<feature type="initiator methionine" description="Removed; alternate" evidence="2">
    <location>
        <position position="1"/>
    </location>
</feature>
<feature type="chain" id="PRO_0000280381" description="Actin, cytoplasmic 2, N-terminally processed">
    <location>
        <begin position="2"/>
        <end position="375"/>
    </location>
</feature>
<feature type="modified residue" description="N-acetylmethionine; in Actin, cytoplasmic 2; alternate" evidence="2">
    <location>
        <position position="1"/>
    </location>
</feature>
<feature type="modified residue" description="N-acetylaspartate; in Actin, cytoplasmic 2, N-terminally processed" evidence="2">
    <location>
        <position position="2"/>
    </location>
</feature>
<feature type="modified residue" description="Methionine (R)-sulfoxide" evidence="1">
    <location>
        <position position="44"/>
    </location>
</feature>
<feature type="modified residue" description="Methionine (R)-sulfoxide" evidence="1">
    <location>
        <position position="47"/>
    </location>
</feature>
<feature type="modified residue" description="Tele-methylhistidine" evidence="1">
    <location>
        <position position="73"/>
    </location>
</feature>
<accession>Q5JAK2</accession>
<proteinExistence type="evidence at transcript level"/>
<sequence>MDEEIAALVIDNGSGMCKAGFAGDDAPRAVFPSIVGRPRHQGVMVGMGQKDSYVGDEAQSKRGILTLKYPIEHGIVTNWDDMEKIWHHTFYNELRVAPEEHPVLLTEAPLNPKANREKMTQIMFETFNTPAMYVAIQAVLSLYASGRTTGIVMDSGDGVTHTVPIYEGYALPHAILRLDLAGRDLTDYLMKILTERGYSFTTTAEREIVRDIKEKLCYVALDFEQEMATAASSSSLEKSYELPDGQVITIGNERFRCPEALFQPSFLGMESCGIHETTFNSIMKCDVDIRKDLYANTVLSGGTTMYPGIADRMQKEITALAPSTMKIKIIAPPERKYSVWIGGSILASLSTFQQMWISKQEYDESGPSIVHRKCF</sequence>
<name>ACTG_PELLE</name>
<comment type="function">
    <text evidence="2">Actins are highly conserved proteins that are involved in various types of cell motility and are ubiquitously expressed in all eukaryotic cells.</text>
</comment>
<comment type="catalytic activity">
    <reaction evidence="3">
        <text>ATP + H2O = ADP + phosphate + H(+)</text>
        <dbReference type="Rhea" id="RHEA:13065"/>
        <dbReference type="ChEBI" id="CHEBI:15377"/>
        <dbReference type="ChEBI" id="CHEBI:15378"/>
        <dbReference type="ChEBI" id="CHEBI:30616"/>
        <dbReference type="ChEBI" id="CHEBI:43474"/>
        <dbReference type="ChEBI" id="CHEBI:456216"/>
    </reaction>
</comment>
<comment type="subunit">
    <text>Polymerization of globular actin (G-actin) leads to a structural filament (F-actin) in the form of a two-stranded helix. Each actin can bind to 4 others.</text>
</comment>
<comment type="subcellular location">
    <subcellularLocation>
        <location evidence="2">Cytoplasm</location>
        <location evidence="2">Cytoskeleton</location>
    </subcellularLocation>
</comment>
<comment type="PTM">
    <molecule>Actin, cytoplasmic 2</molecule>
    <text evidence="2">N-terminal cleavage of acetylated methionine of immature cytoplasmic actin by ACTMAP.</text>
</comment>
<comment type="PTM">
    <text evidence="1">Oxidation of Met-44 and Met-47 by MICALs (mical1, mical2 or MICAL3) to form methionine sulfoxide promotes actin filament depolymerization. Mical1 and mical2 produce the (R)-S-oxide form. The (R)-S-oxide form is reverted by msrb1 and msrb2, which promote actin repolymerization.</text>
</comment>
<comment type="PTM">
    <text evidence="2">Methylated at His-73 by SETD3.</text>
</comment>
<comment type="miscellaneous">
    <text>In vertebrates 3 main groups of actin isoforms, alpha, beta and gamma have been identified. The alpha actins are found in muscle tissues and are a major constituent of the contractile apparatus. The beta and gamma actins coexist in most cell types as components of the cytoskeleton and as mediators of internal cell motility.</text>
</comment>
<comment type="similarity">
    <text evidence="4">Belongs to the actin family.</text>
</comment>
<protein>
    <recommendedName>
        <fullName>Actin, cytoplasmic 2</fullName>
        <ecNumber evidence="3">3.6.4.-</ecNumber>
    </recommendedName>
    <alternativeName>
        <fullName>Cytoplasmic actin type 5</fullName>
    </alternativeName>
    <alternativeName>
        <fullName>Gamma-actin</fullName>
    </alternativeName>
    <component>
        <recommendedName>
            <fullName>Actin, cytoplasmic 2, N-terminally processed</fullName>
        </recommendedName>
    </component>
</protein>
<keyword id="KW-0007">Acetylation</keyword>
<keyword id="KW-0067">ATP-binding</keyword>
<keyword id="KW-0963">Cytoplasm</keyword>
<keyword id="KW-0206">Cytoskeleton</keyword>
<keyword id="KW-0378">Hydrolase</keyword>
<keyword id="KW-0488">Methylation</keyword>
<keyword id="KW-0547">Nucleotide-binding</keyword>
<keyword id="KW-0558">Oxidation</keyword>
<evidence type="ECO:0000250" key="1">
    <source>
        <dbReference type="UniProtKB" id="P63260"/>
    </source>
</evidence>
<evidence type="ECO:0000250" key="2">
    <source>
        <dbReference type="UniProtKB" id="P63261"/>
    </source>
</evidence>
<evidence type="ECO:0000250" key="3">
    <source>
        <dbReference type="UniProtKB" id="P68137"/>
    </source>
</evidence>
<evidence type="ECO:0000305" key="4"/>
<reference key="1">
    <citation type="submission" date="2003-04" db="EMBL/GenBank/DDBJ databases">
        <title>Molecular cloning and expression of a smooth muscle and two cytoskeletal isoactins in the frog Rana lessonae.</title>
        <authorList>
            <person name="Fagotti A."/>
            <person name="Simoncelli F."/>
            <person name="Chianella S."/>
            <person name="Di Rosa I."/>
            <person name="Pascolini R."/>
        </authorList>
    </citation>
    <scope>NUCLEOTIDE SEQUENCE [MRNA]</scope>
    <source>
        <tissue>Stomach</tissue>
    </source>
</reference>
<organism>
    <name type="scientific">Pelophylax lessonae</name>
    <name type="common">Pool frog</name>
    <name type="synonym">Rana lessonae</name>
    <dbReference type="NCBI Taxonomy" id="45623"/>
    <lineage>
        <taxon>Eukaryota</taxon>
        <taxon>Metazoa</taxon>
        <taxon>Chordata</taxon>
        <taxon>Craniata</taxon>
        <taxon>Vertebrata</taxon>
        <taxon>Euteleostomi</taxon>
        <taxon>Amphibia</taxon>
        <taxon>Batrachia</taxon>
        <taxon>Anura</taxon>
        <taxon>Neobatrachia</taxon>
        <taxon>Ranoidea</taxon>
        <taxon>Ranidae</taxon>
        <taxon>Pelophylax</taxon>
    </lineage>
</organism>
<dbReference type="EC" id="3.6.4.-" evidence="3"/>
<dbReference type="EMBL" id="AY272629">
    <property type="protein sequence ID" value="AAQ18433.1"/>
    <property type="molecule type" value="mRNA"/>
</dbReference>
<dbReference type="SMR" id="Q5JAK2"/>
<dbReference type="GO" id="GO:0005856">
    <property type="term" value="C:cytoskeleton"/>
    <property type="evidence" value="ECO:0000250"/>
    <property type="project" value="AgBase"/>
</dbReference>
<dbReference type="GO" id="GO:0097433">
    <property type="term" value="C:dense body"/>
    <property type="evidence" value="ECO:0000250"/>
    <property type="project" value="AgBase"/>
</dbReference>
<dbReference type="GO" id="GO:0005925">
    <property type="term" value="C:focal adhesion"/>
    <property type="evidence" value="ECO:0000250"/>
    <property type="project" value="AgBase"/>
</dbReference>
<dbReference type="GO" id="GO:0005886">
    <property type="term" value="C:plasma membrane"/>
    <property type="evidence" value="ECO:0000250"/>
    <property type="project" value="AgBase"/>
</dbReference>
<dbReference type="GO" id="GO:0005524">
    <property type="term" value="F:ATP binding"/>
    <property type="evidence" value="ECO:0007669"/>
    <property type="project" value="UniProtKB-KW"/>
</dbReference>
<dbReference type="GO" id="GO:0016787">
    <property type="term" value="F:hydrolase activity"/>
    <property type="evidence" value="ECO:0007669"/>
    <property type="project" value="UniProtKB-KW"/>
</dbReference>
<dbReference type="CDD" id="cd10224">
    <property type="entry name" value="ASKHA_NBD_actin"/>
    <property type="match status" value="1"/>
</dbReference>
<dbReference type="FunFam" id="3.30.420.40:FF:000131">
    <property type="entry name" value="Actin, alpha skeletal muscle"/>
    <property type="match status" value="1"/>
</dbReference>
<dbReference type="FunFam" id="3.30.420.40:FF:000291">
    <property type="entry name" value="Actin, alpha skeletal muscle"/>
    <property type="match status" value="1"/>
</dbReference>
<dbReference type="FunFam" id="3.90.640.10:FF:000047">
    <property type="entry name" value="Actin, alpha skeletal muscle"/>
    <property type="match status" value="1"/>
</dbReference>
<dbReference type="FunFam" id="3.30.420.40:FF:000058">
    <property type="entry name" value="Putative actin-related protein 5"/>
    <property type="match status" value="1"/>
</dbReference>
<dbReference type="Gene3D" id="3.30.420.40">
    <property type="match status" value="2"/>
</dbReference>
<dbReference type="Gene3D" id="3.90.640.10">
    <property type="entry name" value="Actin, Chain A, domain 4"/>
    <property type="match status" value="1"/>
</dbReference>
<dbReference type="InterPro" id="IPR004000">
    <property type="entry name" value="Actin"/>
</dbReference>
<dbReference type="InterPro" id="IPR020902">
    <property type="entry name" value="Actin/actin-like_CS"/>
</dbReference>
<dbReference type="InterPro" id="IPR004001">
    <property type="entry name" value="Actin_CS"/>
</dbReference>
<dbReference type="InterPro" id="IPR043129">
    <property type="entry name" value="ATPase_NBD"/>
</dbReference>
<dbReference type="PANTHER" id="PTHR11937">
    <property type="entry name" value="ACTIN"/>
    <property type="match status" value="1"/>
</dbReference>
<dbReference type="Pfam" id="PF00022">
    <property type="entry name" value="Actin"/>
    <property type="match status" value="1"/>
</dbReference>
<dbReference type="PRINTS" id="PR00190">
    <property type="entry name" value="ACTIN"/>
</dbReference>
<dbReference type="SMART" id="SM00268">
    <property type="entry name" value="ACTIN"/>
    <property type="match status" value="1"/>
</dbReference>
<dbReference type="SUPFAM" id="SSF53067">
    <property type="entry name" value="Actin-like ATPase domain"/>
    <property type="match status" value="2"/>
</dbReference>
<dbReference type="PROSITE" id="PS00406">
    <property type="entry name" value="ACTINS_1"/>
    <property type="match status" value="1"/>
</dbReference>
<dbReference type="PROSITE" id="PS00432">
    <property type="entry name" value="ACTINS_2"/>
    <property type="match status" value="1"/>
</dbReference>
<dbReference type="PROSITE" id="PS01132">
    <property type="entry name" value="ACTINS_ACT_LIKE"/>
    <property type="match status" value="1"/>
</dbReference>